<proteinExistence type="inferred from homology"/>
<organism>
    <name type="scientific">Sulfolobus acidocaldarius (strain ATCC 33909 / DSM 639 / JCM 8929 / NBRC 15157 / NCIMB 11770)</name>
    <dbReference type="NCBI Taxonomy" id="330779"/>
    <lineage>
        <taxon>Archaea</taxon>
        <taxon>Thermoproteota</taxon>
        <taxon>Thermoprotei</taxon>
        <taxon>Sulfolobales</taxon>
        <taxon>Sulfolobaceae</taxon>
        <taxon>Sulfolobus</taxon>
    </lineage>
</organism>
<keyword id="KW-0963">Cytoplasm</keyword>
<keyword id="KW-0444">Lipid biosynthesis</keyword>
<keyword id="KW-0443">Lipid metabolism</keyword>
<keyword id="KW-0460">Magnesium</keyword>
<keyword id="KW-0479">Metal-binding</keyword>
<keyword id="KW-0594">Phospholipid biosynthesis</keyword>
<keyword id="KW-1208">Phospholipid metabolism</keyword>
<keyword id="KW-1185">Reference proteome</keyword>
<keyword id="KW-0808">Transferase</keyword>
<evidence type="ECO:0000255" key="1">
    <source>
        <dbReference type="HAMAP-Rule" id="MF_00112"/>
    </source>
</evidence>
<protein>
    <recommendedName>
        <fullName evidence="1">Geranylgeranylglyceryl phosphate synthase</fullName>
        <shortName evidence="1">GGGP synthase</shortName>
        <shortName evidence="1">GGGPS</shortName>
        <ecNumber evidence="1">2.5.1.41</ecNumber>
    </recommendedName>
    <alternativeName>
        <fullName evidence="1">(S)-3-O-geranylgeranylglyceryl phosphate synthase</fullName>
    </alternativeName>
    <alternativeName>
        <fullName evidence="1">Phosphoglycerol geranylgeranyltransferase</fullName>
    </alternativeName>
</protein>
<accession>Q4JAS3</accession>
<name>GGGPS_SULAC</name>
<reference key="1">
    <citation type="journal article" date="2005" name="J. Bacteriol.">
        <title>The genome of Sulfolobus acidocaldarius, a model organism of the Crenarchaeota.</title>
        <authorList>
            <person name="Chen L."/>
            <person name="Bruegger K."/>
            <person name="Skovgaard M."/>
            <person name="Redder P."/>
            <person name="She Q."/>
            <person name="Torarinsson E."/>
            <person name="Greve B."/>
            <person name="Awayez M."/>
            <person name="Zibat A."/>
            <person name="Klenk H.-P."/>
            <person name="Garrett R.A."/>
        </authorList>
    </citation>
    <scope>NUCLEOTIDE SEQUENCE [LARGE SCALE GENOMIC DNA]</scope>
    <source>
        <strain>ATCC 33909 / DSM 639 / JCM 8929 / NBRC 15157 / NCIMB 11770</strain>
    </source>
</reference>
<comment type="function">
    <text evidence="1">Prenyltransferase that catalyzes the transfer of the geranylgeranyl moiety of geranylgeranyl diphosphate (GGPP) to the C3 hydroxyl of sn-glycerol-1-phosphate (G1P). This reaction is the first ether-bond-formation step in the biosynthesis of archaeal membrane lipids.</text>
</comment>
<comment type="catalytic activity">
    <reaction evidence="1">
        <text>sn-glycerol 1-phosphate + (2E,6E,10E)-geranylgeranyl diphosphate = sn-3-O-(geranylgeranyl)glycerol 1-phosphate + diphosphate</text>
        <dbReference type="Rhea" id="RHEA:23404"/>
        <dbReference type="ChEBI" id="CHEBI:33019"/>
        <dbReference type="ChEBI" id="CHEBI:57677"/>
        <dbReference type="ChEBI" id="CHEBI:57685"/>
        <dbReference type="ChEBI" id="CHEBI:58756"/>
        <dbReference type="EC" id="2.5.1.41"/>
    </reaction>
</comment>
<comment type="cofactor">
    <cofactor evidence="1">
        <name>Mg(2+)</name>
        <dbReference type="ChEBI" id="CHEBI:18420"/>
    </cofactor>
</comment>
<comment type="pathway">
    <text evidence="1">Membrane lipid metabolism; glycerophospholipid metabolism.</text>
</comment>
<comment type="subcellular location">
    <subcellularLocation>
        <location evidence="1">Cytoplasm</location>
    </subcellularLocation>
</comment>
<comment type="similarity">
    <text evidence="1">Belongs to the GGGP/HepGP synthase family. Group II subfamily.</text>
</comment>
<dbReference type="EC" id="2.5.1.41" evidence="1"/>
<dbReference type="EMBL" id="CP000077">
    <property type="protein sequence ID" value="AAY80106.1"/>
    <property type="molecule type" value="Genomic_DNA"/>
</dbReference>
<dbReference type="RefSeq" id="WP_011277608.1">
    <property type="nucleotide sequence ID" value="NC_007181.1"/>
</dbReference>
<dbReference type="SMR" id="Q4JAS3"/>
<dbReference type="STRING" id="330779.Saci_0728"/>
<dbReference type="GeneID" id="14551245"/>
<dbReference type="KEGG" id="sai:Saci_0728"/>
<dbReference type="PATRIC" id="fig|330779.12.peg.697"/>
<dbReference type="eggNOG" id="arCOG01085">
    <property type="taxonomic scope" value="Archaea"/>
</dbReference>
<dbReference type="HOGENOM" id="CLU_068610_0_0_2"/>
<dbReference type="UniPathway" id="UPA00940"/>
<dbReference type="Proteomes" id="UP000001018">
    <property type="component" value="Chromosome"/>
</dbReference>
<dbReference type="GO" id="GO:0005737">
    <property type="term" value="C:cytoplasm"/>
    <property type="evidence" value="ECO:0007669"/>
    <property type="project" value="UniProtKB-SubCell"/>
</dbReference>
<dbReference type="GO" id="GO:0000287">
    <property type="term" value="F:magnesium ion binding"/>
    <property type="evidence" value="ECO:0007669"/>
    <property type="project" value="UniProtKB-UniRule"/>
</dbReference>
<dbReference type="GO" id="GO:0047294">
    <property type="term" value="F:phosphoglycerol geranylgeranyltransferase activity"/>
    <property type="evidence" value="ECO:0007669"/>
    <property type="project" value="UniProtKB-UniRule"/>
</dbReference>
<dbReference type="GO" id="GO:0046474">
    <property type="term" value="P:glycerophospholipid biosynthetic process"/>
    <property type="evidence" value="ECO:0007669"/>
    <property type="project" value="UniProtKB-UniRule"/>
</dbReference>
<dbReference type="CDD" id="cd02812">
    <property type="entry name" value="PcrB_like"/>
    <property type="match status" value="1"/>
</dbReference>
<dbReference type="FunFam" id="3.20.20.390:FF:000001">
    <property type="entry name" value="Heptaprenylglyceryl phosphate synthase"/>
    <property type="match status" value="1"/>
</dbReference>
<dbReference type="Gene3D" id="3.20.20.390">
    <property type="entry name" value="FMN-linked oxidoreductases"/>
    <property type="match status" value="1"/>
</dbReference>
<dbReference type="HAMAP" id="MF_00112">
    <property type="entry name" value="GGGP_HepGP_synthase"/>
    <property type="match status" value="1"/>
</dbReference>
<dbReference type="InterPro" id="IPR039074">
    <property type="entry name" value="GGGP/HepGP_synthase_I"/>
</dbReference>
<dbReference type="InterPro" id="IPR038597">
    <property type="entry name" value="GGGP/HepGP_synthase_sf"/>
</dbReference>
<dbReference type="InterPro" id="IPR008205">
    <property type="entry name" value="GGGP_HepGP_synthase"/>
</dbReference>
<dbReference type="InterPro" id="IPR010946">
    <property type="entry name" value="GGGP_synth"/>
</dbReference>
<dbReference type="NCBIfam" id="TIGR01769">
    <property type="entry name" value="GGGP"/>
    <property type="match status" value="1"/>
</dbReference>
<dbReference type="NCBIfam" id="TIGR01768">
    <property type="entry name" value="GGGP-family"/>
    <property type="match status" value="1"/>
</dbReference>
<dbReference type="NCBIfam" id="NF003198">
    <property type="entry name" value="PRK04169.1-2"/>
    <property type="match status" value="1"/>
</dbReference>
<dbReference type="NCBIfam" id="NF003202">
    <property type="entry name" value="PRK04169.1-6"/>
    <property type="match status" value="1"/>
</dbReference>
<dbReference type="PANTHER" id="PTHR40029">
    <property type="match status" value="1"/>
</dbReference>
<dbReference type="PANTHER" id="PTHR40029:SF2">
    <property type="entry name" value="HEPTAPRENYLGLYCERYL PHOSPHATE SYNTHASE"/>
    <property type="match status" value="1"/>
</dbReference>
<dbReference type="Pfam" id="PF01884">
    <property type="entry name" value="PcrB"/>
    <property type="match status" value="1"/>
</dbReference>
<dbReference type="SUPFAM" id="SSF51395">
    <property type="entry name" value="FMN-linked oxidoreductases"/>
    <property type="match status" value="1"/>
</dbReference>
<gene>
    <name type="ordered locus">Saci_0728</name>
</gene>
<sequence>MKFRGKVARYISEILEEGKTLHFSLFDPDKIFDLDSLHDIASKLIEAGTDVFLIGGTLGISQDKLDNILSILEEFSIPLIIFPSNVNLISNKADAILFLSLLNSDDLYYIVGAQIVAAPIIKRIGLEVLPTAYLIIGHGGTAGHIGRARVIPYDNIELIVSYSLAANYMGMKYIYLEAGSGASETVKPEAIKVVKNTVKDGVVIVGGGVTSEERARNLVLAGADIIVTGNVIERDHQKALKIIKEIKSIRRTSNAIK</sequence>
<feature type="chain" id="PRO_0000138743" description="Geranylgeranylglyceryl phosphate synthase">
    <location>
        <begin position="1"/>
        <end position="257"/>
    </location>
</feature>
<feature type="binding site" evidence="1">
    <location>
        <position position="27"/>
    </location>
    <ligand>
        <name>Mg(2+)</name>
        <dbReference type="ChEBI" id="CHEBI:18420"/>
    </ligand>
</feature>
<feature type="binding site" evidence="1">
    <location>
        <position position="57"/>
    </location>
    <ligand>
        <name>Mg(2+)</name>
        <dbReference type="ChEBI" id="CHEBI:18420"/>
    </ligand>
</feature>
<feature type="binding site" evidence="1">
    <location>
        <begin position="175"/>
        <end position="181"/>
    </location>
    <ligand>
        <name>sn-glycerol 1-phosphate</name>
        <dbReference type="ChEBI" id="CHEBI:57685"/>
    </ligand>
</feature>
<feature type="binding site" evidence="1">
    <location>
        <begin position="207"/>
        <end position="208"/>
    </location>
    <ligand>
        <name>sn-glycerol 1-phosphate</name>
        <dbReference type="ChEBI" id="CHEBI:57685"/>
    </ligand>
</feature>
<feature type="binding site" evidence="1">
    <location>
        <begin position="229"/>
        <end position="230"/>
    </location>
    <ligand>
        <name>sn-glycerol 1-phosphate</name>
        <dbReference type="ChEBI" id="CHEBI:57685"/>
    </ligand>
</feature>